<keyword id="KW-1003">Cell membrane</keyword>
<keyword id="KW-0472">Membrane</keyword>
<keyword id="KW-1185">Reference proteome</keyword>
<keyword id="KW-0812">Transmembrane</keyword>
<keyword id="KW-1133">Transmembrane helix</keyword>
<evidence type="ECO:0000255" key="1"/>
<evidence type="ECO:0000256" key="2">
    <source>
        <dbReference type="SAM" id="MobiDB-lite"/>
    </source>
</evidence>
<evidence type="ECO:0000305" key="3"/>
<proteinExistence type="predicted"/>
<gene>
    <name type="ordered locus">TP_0126</name>
</gene>
<accession>O83163</accession>
<comment type="subcellular location">
    <subcellularLocation>
        <location evidence="3">Cell membrane</location>
        <topology evidence="3">Multi-pass membrane protein</topology>
    </subcellularLocation>
</comment>
<comment type="similarity">
    <text evidence="3">To T.pallidum TP_0733.</text>
</comment>
<dbReference type="EMBL" id="AE000520">
    <property type="protein sequence ID" value="AAC65118.1"/>
    <property type="molecule type" value="Genomic_DNA"/>
</dbReference>
<dbReference type="PIR" id="C71362">
    <property type="entry name" value="C71362"/>
</dbReference>
<dbReference type="IntAct" id="O83163">
    <property type="interactions" value="2"/>
</dbReference>
<dbReference type="STRING" id="243276.TP_0126"/>
<dbReference type="TCDB" id="1.B.6.10.2">
    <property type="family name" value="the ompa-ompf porin (oop) family"/>
</dbReference>
<dbReference type="EnsemblBacteria" id="AAC65118">
    <property type="protein sequence ID" value="AAC65118"/>
    <property type="gene ID" value="TP_0126"/>
</dbReference>
<dbReference type="KEGG" id="tpa:TP_0126"/>
<dbReference type="HOGENOM" id="CLU_083340_0_0_12"/>
<dbReference type="Proteomes" id="UP000000811">
    <property type="component" value="Chromosome"/>
</dbReference>
<dbReference type="GO" id="GO:0005886">
    <property type="term" value="C:plasma membrane"/>
    <property type="evidence" value="ECO:0007669"/>
    <property type="project" value="UniProtKB-SubCell"/>
</dbReference>
<dbReference type="InterPro" id="IPR011250">
    <property type="entry name" value="OMP/PagP_b-brl"/>
</dbReference>
<dbReference type="SUPFAM" id="SSF56925">
    <property type="entry name" value="OMPA-like"/>
    <property type="match status" value="1"/>
</dbReference>
<reference key="1">
    <citation type="journal article" date="1998" name="Science">
        <title>Complete genome sequence of Treponema pallidum, the syphilis spirochete.</title>
        <authorList>
            <person name="Fraser C.M."/>
            <person name="Norris S.J."/>
            <person name="Weinstock G.M."/>
            <person name="White O."/>
            <person name="Sutton G.G."/>
            <person name="Dodson R.J."/>
            <person name="Gwinn M.L."/>
            <person name="Hickey E.K."/>
            <person name="Clayton R.A."/>
            <person name="Ketchum K.A."/>
            <person name="Sodergren E."/>
            <person name="Hardham J.M."/>
            <person name="McLeod M.P."/>
            <person name="Salzberg S.L."/>
            <person name="Peterson J.D."/>
            <person name="Khalak H.G."/>
            <person name="Richardson D.L."/>
            <person name="Howell J.K."/>
            <person name="Chidambaram M."/>
            <person name="Utterback T.R."/>
            <person name="McDonald L.A."/>
            <person name="Artiach P."/>
            <person name="Bowman C."/>
            <person name="Cotton M.D."/>
            <person name="Fujii C."/>
            <person name="Garland S.A."/>
            <person name="Hatch B."/>
            <person name="Horst K."/>
            <person name="Roberts K.M."/>
            <person name="Sandusky M."/>
            <person name="Weidman J.F."/>
            <person name="Smith H.O."/>
            <person name="Venter J.C."/>
        </authorList>
    </citation>
    <scope>NUCLEOTIDE SEQUENCE [LARGE SCALE GENOMIC DNA]</scope>
    <source>
        <strain>Nichols</strain>
    </source>
</reference>
<organism>
    <name type="scientific">Treponema pallidum (strain Nichols)</name>
    <dbReference type="NCBI Taxonomy" id="243276"/>
    <lineage>
        <taxon>Bacteria</taxon>
        <taxon>Pseudomonadati</taxon>
        <taxon>Spirochaetota</taxon>
        <taxon>Spirochaetia</taxon>
        <taxon>Spirochaetales</taxon>
        <taxon>Treponemataceae</taxon>
        <taxon>Treponema</taxon>
    </lineage>
</organism>
<feature type="chain" id="PRO_0000202192" description="Uncharacterized protein TP_0126">
    <location>
        <begin position="1"/>
        <end position="291"/>
    </location>
</feature>
<feature type="transmembrane region" description="Helical" evidence="1">
    <location>
        <begin position="74"/>
        <end position="96"/>
    </location>
</feature>
<feature type="transmembrane region" description="Helical" evidence="1">
    <location>
        <begin position="188"/>
        <end position="210"/>
    </location>
</feature>
<feature type="region of interest" description="Disordered" evidence="2">
    <location>
        <begin position="1"/>
        <end position="55"/>
    </location>
</feature>
<protein>
    <recommendedName>
        <fullName>Uncharacterized protein TP_0126</fullName>
    </recommendedName>
</protein>
<sequence>MRTHDIPRSPLVGHKKNAAPDGIGASRACCPARENEPFKKGSTNSRGGGVEWSRSSTRRVRGSALERGMKQLKWWAVGPVLGICAGVWGAAHPVHADPWDTTAAGRSTIRLSAMGAVPLFQVDWCNSGRGDDRNANAQTNGHKYIYPAFSAALGFEHFVCRGLSLGIDASVQYHCSYPNNTYSPTTPYYYLAIPVALTAGYTVAFWRIRLPLTVGAGFNYQHYYTSTYYGLVLKAAAGCYFQLTEHWSLGVSATYSGVPRSCEKIIEEDRQQTNTRTAQFIAAGVDVRYHL</sequence>
<name>Y126_TREPA</name>